<proteinExistence type="evidence at protein level"/>
<comment type="function">
    <text evidence="6">Involved in the biosynthesis of phenolic monoterpenes natural products thymol and carvacrol which have a broad range of biological activities acting as antimicrobial compounds, insecticides, antioxidants and pharmaceutical agents (PubMed:23624978). Monoterpene synthase which catalyzes the conversion of geranyl diphosphate (GPP) to gamma-terpinene and minor amounts of other monoterpenes (e.g. alpha-thujene, alpha-terpinene, myrcene, sabinene, (+)-R-limonene, alpha-pinene and alpha-phellandrene) (PubMed:23624978).</text>
</comment>
<comment type="catalytic activity">
    <reaction evidence="6">
        <text>(2E)-geranyl diphosphate = gamma-terpinene + diphosphate</text>
        <dbReference type="Rhea" id="RHEA:32559"/>
        <dbReference type="ChEBI" id="CHEBI:10577"/>
        <dbReference type="ChEBI" id="CHEBI:33019"/>
        <dbReference type="ChEBI" id="CHEBI:58057"/>
        <dbReference type="EC" id="4.2.3.114"/>
    </reaction>
    <physiologicalReaction direction="left-to-right" evidence="6">
        <dbReference type="Rhea" id="RHEA:32560"/>
    </physiologicalReaction>
</comment>
<comment type="cofactor">
    <cofactor evidence="3">
        <name>Mn(2+)</name>
        <dbReference type="ChEBI" id="CHEBI:29035"/>
    </cofactor>
    <cofactor evidence="3">
        <name>Mg(2+)</name>
        <dbReference type="ChEBI" id="CHEBI:18420"/>
    </cofactor>
    <text evidence="3">Binds 3 Mg(2+) or Mn(2+) ions per subunit.</text>
</comment>
<comment type="pathway">
    <text evidence="6">Secondary metabolite biosynthesis; terpenoid biosynthesis.</text>
</comment>
<comment type="subunit">
    <text evidence="1">Homodimer.</text>
</comment>
<comment type="subcellular location">
    <subcellularLocation>
        <location evidence="5">Plastid</location>
        <location evidence="5">Chloroplast</location>
    </subcellularLocation>
</comment>
<comment type="domain">
    <text evidence="4">The Asp-Asp-Xaa-Xaa-Asp/Glu (DDXXD/E) motif is important for the catalytic activity, presumably through binding to Mg(2+).</text>
</comment>
<comment type="biotechnology">
    <text evidence="9 10 13 15">The monoterpenic phenol thymol is widely used as a fragrance and a flavoring ingredient in food and cosmetic industries (PubMed:29785774). Its derivatives have also several biological and pharmacological properties such as antimicrobial, antioxidant, anticarcinogenesis, anti-inflammatory and antispasmodic activities (PubMed:29785774, PubMed:29874939). Medical applications include the treatment of disorders affecting the respiratory, nervous, and cardiovascular systems (PubMed:29785774). It may also act as a growth enhancer and immunomodulator (PubMed:29785774). Thymol may also have antiviral activity toward COVID-19 by binding to the S1 receptor binding domain of the SARS-CoV-2 spike (S) glycoprotein (PubMed:32834111, PubMed:33855010).</text>
</comment>
<comment type="biotechnology">
    <text evidence="8 10 11 12 13 14 15">The monoterpenic phenol carvacrol is commonly used as a fragrance and a food flavoring ingredient and preservative (PubMed:24915411). Its derivatives exhibit also various biological and pharmacological properties including antioxidant, antibacterial, antifungal, insecticid, nematicid, anticancer, anti-inflammatory, hepatoprotective, spasmolytic, and vasorelaxant (PubMed:24915411, PubMed:29874939, PubMed:30836858, PubMed:33664752). Phytochemical inhibitor targeting the main SARS-CoV-2 viral protease (Mpro) and ACE2 in human host cells, carvacrol is a possible candidate for treating COVID-19 (PubMed:32448034, PubMed:33664752). Carvacrol may also have antiviral activity toward COVID-19 by binding to the S1 receptor binding domain of the SARS-CoV-2 spike (S) glycoprotein (PubMed:32834111, PubMed:33855010).</text>
</comment>
<comment type="similarity">
    <text evidence="16">Belongs to the terpene synthase family.</text>
</comment>
<feature type="transit peptide" description="Chloroplast" evidence="5">
    <location>
        <begin position="1"/>
        <end position="47"/>
    </location>
</feature>
<feature type="chain" id="PRO_0000453306" description="Gamma-terpinene synthase, chloroplastic">
    <location>
        <begin position="48"/>
        <end position="597"/>
    </location>
</feature>
<feature type="region of interest" description="Homodimerization" evidence="1">
    <location>
        <begin position="356"/>
        <end position="362"/>
    </location>
</feature>
<feature type="region of interest" description="Homodimerization" evidence="1">
    <location>
        <begin position="428"/>
        <end position="465"/>
    </location>
</feature>
<feature type="short sequence motif" description="DDXXD motif" evidence="4">
    <location>
        <begin position="350"/>
        <end position="354"/>
    </location>
</feature>
<feature type="binding site" evidence="2">
    <location>
        <position position="350"/>
    </location>
    <ligand>
        <name>Mn(2+)</name>
        <dbReference type="ChEBI" id="CHEBI:29035"/>
        <label>1</label>
    </ligand>
</feature>
<feature type="binding site" evidence="2">
    <location>
        <position position="350"/>
    </location>
    <ligand>
        <name>Mn(2+)</name>
        <dbReference type="ChEBI" id="CHEBI:29035"/>
        <label>2</label>
    </ligand>
</feature>
<feature type="binding site" evidence="2">
    <location>
        <position position="354"/>
    </location>
    <ligand>
        <name>Mn(2+)</name>
        <dbReference type="ChEBI" id="CHEBI:29035"/>
        <label>1</label>
    </ligand>
</feature>
<feature type="binding site" evidence="2">
    <location>
        <position position="354"/>
    </location>
    <ligand>
        <name>Mn(2+)</name>
        <dbReference type="ChEBI" id="CHEBI:29035"/>
        <label>2</label>
    </ligand>
</feature>
<feature type="binding site" evidence="2">
    <location>
        <position position="494"/>
    </location>
    <ligand>
        <name>Mn(2+)</name>
        <dbReference type="ChEBI" id="CHEBI:29035"/>
        <label>3</label>
    </ligand>
</feature>
<feature type="binding site" evidence="2">
    <location>
        <position position="502"/>
    </location>
    <ligand>
        <name>Mn(2+)</name>
        <dbReference type="ChEBI" id="CHEBI:29035"/>
        <label>3</label>
    </ligand>
</feature>
<feature type="sequence conflict" description="In Ref. 1; AGK88252." evidence="16" ref="1">
    <original>L</original>
    <variation>F</variation>
    <location>
        <position position="374"/>
    </location>
</feature>
<feature type="sequence conflict" description="In Ref. 1; AGK88252." evidence="16" ref="1">
    <original>G</original>
    <variation>R</variation>
    <location>
        <position position="470"/>
    </location>
</feature>
<feature type="sequence conflict" description="In Ref. 1; AGK88252." evidence="16" ref="1">
    <original>M</original>
    <variation>I</variation>
    <location>
        <position position="482"/>
    </location>
</feature>
<gene>
    <name evidence="7" type="primary">TPS2</name>
</gene>
<accession>R4JND9</accession>
<accession>R4JJI7</accession>
<evidence type="ECO:0000250" key="1">
    <source>
        <dbReference type="UniProtKB" id="A0A0M3Q1Q3"/>
    </source>
</evidence>
<evidence type="ECO:0000250" key="2">
    <source>
        <dbReference type="UniProtKB" id="A0A1C9J6A7"/>
    </source>
</evidence>
<evidence type="ECO:0000250" key="3">
    <source>
        <dbReference type="UniProtKB" id="E2E2P0"/>
    </source>
</evidence>
<evidence type="ECO:0000250" key="4">
    <source>
        <dbReference type="UniProtKB" id="Q9X839"/>
    </source>
</evidence>
<evidence type="ECO:0000255" key="5"/>
<evidence type="ECO:0000269" key="6">
    <source>
    </source>
</evidence>
<evidence type="ECO:0000303" key="7">
    <source>
    </source>
</evidence>
<evidence type="ECO:0000303" key="8">
    <source>
    </source>
</evidence>
<evidence type="ECO:0000303" key="9">
    <source>
    </source>
</evidence>
<evidence type="ECO:0000303" key="10">
    <source>
    </source>
</evidence>
<evidence type="ECO:0000303" key="11">
    <source>
    </source>
</evidence>
<evidence type="ECO:0000303" key="12">
    <source>
    </source>
</evidence>
<evidence type="ECO:0000303" key="13">
    <source>
    </source>
</evidence>
<evidence type="ECO:0000303" key="14">
    <source>
    </source>
</evidence>
<evidence type="ECO:0000303" key="15">
    <source>
    </source>
</evidence>
<evidence type="ECO:0000305" key="16"/>
<sequence length="597" mass="69183">MATLSMQVSILSKQVKNLNSFGMRASKLPMVARRVDVSTTRLRPICSASLQVEEETRRSGNYQASIWDNAFIQSFNTNKYRDEKHLNRKEELIAQVKVLLNTKMEAVKQLELIDDLRNLGLTYYFQDEFKKILTCIYNDHKCFKNEQVGDLYFTSLGFRLLRLHGFDVSEDVFSFFKNEDGSDFKASLGENTKDVLQLYEASFPIRVGEVTLEQARVFSTKILEKKVDEGINDEKLLAWIQHSLALPLHWRIQRLEARWFLDAYAARKDMNPLIFELGKIDFHIIQETQLEEVQEVSRWWTNSNLAEKLPFVRDRIVECYFWALGLFEPHEYGYQRKMAAIIITFVTIIDDVYDVYGTLDELQLFTDAIRKWDLESISTLPYYMQVCYLALYTYASELAYDILKDQGFNSISYLQRSWLSLVEGFFQEAKWYYAGYTPTLAEYLENAKVSISSPTIISQVYFTLPNSNEGTVVENVYGYHNMLYLSGMILRLADDLGTTQFELKRGDVQKAIQCYMKDNNATEKEGQEHVKYLLREAWKEMNTAMADPDCPLSEDLVDAAANLGRASQFIYLEGDGHGVQHSEIHNQMGGLIFEPYV</sequence>
<reference key="1">
    <citation type="journal article" date="2013" name="Planta">
        <title>Genomic characterization, molecular cloning and expression analysis of two terpene synthases from Thymus caespititius (Lamiaceae).</title>
        <authorList>
            <person name="Lima A.S."/>
            <person name="Schimmel J."/>
            <person name="Lukas B."/>
            <person name="Novak J."/>
            <person name="Barroso J.G."/>
            <person name="Figueiredo A.C."/>
            <person name="Pedro L.G."/>
            <person name="Degenhardt J."/>
            <person name="Trindade H."/>
        </authorList>
    </citation>
    <scope>NUCLEOTIDE SEQUENCE [GENOMIC DNA / MRNA]</scope>
    <scope>FUNCTION</scope>
    <scope>CATALYTIC ACTIVITY</scope>
    <scope>PATHWAY</scope>
    <source>
        <strain>cv. 319</strain>
        <tissue>Flower</tissue>
    </source>
</reference>
<reference key="2">
    <citation type="journal article" date="2015" name="Crit. Rev. Food Sci. Nutr.">
        <title>The bioactivity and toxicological actions of carvacrol.</title>
        <authorList>
            <person name="Suntres Z.E."/>
            <person name="Coccimiglio J."/>
            <person name="Alipour M."/>
        </authorList>
    </citation>
    <scope>REVIEW ON CARVACROL</scope>
    <scope>BIOTECHNOLOGY</scope>
</reference>
<reference key="3">
    <citation type="journal article" date="2018" name="Phytother. Res.">
        <title>Thymol, thyme, and other plant sources: Health and potential uses.</title>
        <authorList>
            <person name="Salehi B."/>
            <person name="Mishra A.P."/>
            <person name="Shukla I."/>
            <person name="Sharifi-Rad M."/>
            <person name="Contreras M.D.M."/>
            <person name="Segura-Carretero A."/>
            <person name="Fathi H."/>
            <person name="Nasrabadi N.N."/>
            <person name="Kobarfard F."/>
            <person name="Sharifi-Rad J."/>
        </authorList>
    </citation>
    <scope>REVIEW ON THYMOL</scope>
    <scope>BIOTECHNOLOGY</scope>
</reference>
<reference key="4">
    <citation type="journal article" date="2019" name="Nat. Prod. Res.">
        <title>Synthesis and antifungal activity of carvacrol and thymol esters with heteroaromatic carboxylic acids.</title>
        <authorList>
            <person name="Wang K."/>
            <person name="Jiang S."/>
            <person name="Yang Y."/>
            <person name="Fan L."/>
            <person name="Su F."/>
            <person name="Ye M."/>
        </authorList>
    </citation>
    <scope>REVIEW ON CARVACROL AND THYMOL</scope>
    <scope>BIOTECHNOLOGY</scope>
</reference>
<reference key="5">
    <citation type="journal article" date="2020" name="Front. Plant Sci.">
        <title>Carvacrol, a plant metabolite targeting viral protease (Mpro) and ACE2 in host cells can be a possible candidate for COVID-19.</title>
        <authorList>
            <person name="Javed H."/>
            <person name="Meeran M.F.N."/>
            <person name="Jha N.K."/>
            <person name="Ojha S."/>
        </authorList>
    </citation>
    <scope>REVIEW ON CARVACROL EFFECTS ON COVID-19</scope>
    <scope>BIOTECHNOLOGY</scope>
</reference>
<reference key="6">
    <citation type="journal article" date="2020" name="J. Biomol. Struct. Dyn.">
        <title>Identification of phytochemical inhibitors against main protease of COVID-19 using molecular modeling approaches.</title>
        <authorList>
            <person name="Kumar A."/>
            <person name="Choudhir G."/>
            <person name="Shukla S.K."/>
            <person name="Sharma M."/>
            <person name="Tyagi P."/>
            <person name="Bhushan A."/>
            <person name="Rathore M."/>
        </authorList>
    </citation>
    <scope>REVIEW ON CARVACROL EFFECTS ON COVID-19</scope>
    <scope>BIOTECHNOLOGY</scope>
</reference>
<reference key="7">
    <citation type="journal article" date="2020" name="J. Biomol. Struct. Dyn.">
        <title>Synthesis, anticholinesterase activity and molecular modeling studies of novel carvacrol-substituted amide derivatives.</title>
        <authorList>
            <person name="Zengin Kurt B."/>
            <person name="Durdagi S."/>
            <person name="Celebi G."/>
            <person name="Ekhteiari Salmas R."/>
            <person name="Sonmez F."/>
        </authorList>
    </citation>
    <scope>REVIEW ON CARVACROL DERIVATIVES</scope>
    <scope>BIOTECHNOLOGY</scope>
</reference>
<reference key="8">
    <citation type="journal article" date="2020" name="J. Mol. Struct.">
        <title>Computational evaluation of major components from plant essential oils as potent inhibitors of SARS-CoV-2 spike protein.</title>
        <authorList>
            <person name="Kulkarni S.A."/>
            <person name="Nagarajan S.K."/>
            <person name="Ramesh V."/>
            <person name="Palaniyandi V."/>
            <person name="Selvam S.P."/>
            <person name="Madhavan T."/>
        </authorList>
    </citation>
    <scope>REVIEW ON PLANT ESSENTIAL OILS EFFECTS ON COVID-19</scope>
    <scope>BIOTECHNOLOGY</scope>
</reference>
<reference key="9">
    <citation type="journal article" date="2021" name="Front. Chem.">
        <title>Antiviral essential oil components against SARS-CoV-2 in pre-procedural mouth rinses for dental settings during COVID-19: A computational study.</title>
        <authorList>
            <person name="Yadalam P.K."/>
            <person name="Varatharajan K."/>
            <person name="Rajapandian K."/>
            <person name="Chopra P."/>
            <person name="Arumuganainar D."/>
            <person name="Nagarathnam T."/>
            <person name="Sohn H."/>
            <person name="Madhavan T."/>
        </authorList>
    </citation>
    <scope>REVIEW ON PLANT ESSENTIAL OILS EFFECTS ON COVID-19</scope>
    <scope>BIOTECHNOLOGY</scope>
</reference>
<keyword id="KW-0150">Chloroplast</keyword>
<keyword id="KW-0456">Lyase</keyword>
<keyword id="KW-0460">Magnesium</keyword>
<keyword id="KW-0464">Manganese</keyword>
<keyword id="KW-0479">Metal-binding</keyword>
<keyword id="KW-0934">Plastid</keyword>
<keyword id="KW-0809">Transit peptide</keyword>
<dbReference type="EC" id="4.2.3.114" evidence="6"/>
<dbReference type="EMBL" id="KC181097">
    <property type="protein sequence ID" value="AGK88252.1"/>
    <property type="molecule type" value="Genomic_DNA"/>
</dbReference>
<dbReference type="EMBL" id="KC181100">
    <property type="protein sequence ID" value="AGK88255.1"/>
    <property type="molecule type" value="mRNA"/>
</dbReference>
<dbReference type="SMR" id="R4JND9"/>
<dbReference type="UniPathway" id="UPA00213"/>
<dbReference type="GO" id="GO:0009507">
    <property type="term" value="C:chloroplast"/>
    <property type="evidence" value="ECO:0007669"/>
    <property type="project" value="UniProtKB-SubCell"/>
</dbReference>
<dbReference type="GO" id="GO:0000287">
    <property type="term" value="F:magnesium ion binding"/>
    <property type="evidence" value="ECO:0007669"/>
    <property type="project" value="InterPro"/>
</dbReference>
<dbReference type="GO" id="GO:0042803">
    <property type="term" value="F:protein homodimerization activity"/>
    <property type="evidence" value="ECO:0000250"/>
    <property type="project" value="UniProtKB"/>
</dbReference>
<dbReference type="GO" id="GO:0010333">
    <property type="term" value="F:terpene synthase activity"/>
    <property type="evidence" value="ECO:0007669"/>
    <property type="project" value="InterPro"/>
</dbReference>
<dbReference type="GO" id="GO:0016102">
    <property type="term" value="P:diterpenoid biosynthetic process"/>
    <property type="evidence" value="ECO:0007669"/>
    <property type="project" value="InterPro"/>
</dbReference>
<dbReference type="CDD" id="cd00684">
    <property type="entry name" value="Terpene_cyclase_plant_C1"/>
    <property type="match status" value="1"/>
</dbReference>
<dbReference type="FunFam" id="1.10.600.10:FF:000007">
    <property type="entry name" value="Isoprene synthase, chloroplastic"/>
    <property type="match status" value="1"/>
</dbReference>
<dbReference type="FunFam" id="1.50.10.130:FF:000001">
    <property type="entry name" value="Isoprene synthase, chloroplastic"/>
    <property type="match status" value="1"/>
</dbReference>
<dbReference type="Gene3D" id="1.10.600.10">
    <property type="entry name" value="Farnesyl Diphosphate Synthase"/>
    <property type="match status" value="1"/>
</dbReference>
<dbReference type="Gene3D" id="1.50.10.130">
    <property type="entry name" value="Terpene synthase, N-terminal domain"/>
    <property type="match status" value="1"/>
</dbReference>
<dbReference type="InterPro" id="IPR008949">
    <property type="entry name" value="Isoprenoid_synthase_dom_sf"/>
</dbReference>
<dbReference type="InterPro" id="IPR034741">
    <property type="entry name" value="Terpene_cyclase-like_1_C"/>
</dbReference>
<dbReference type="InterPro" id="IPR044814">
    <property type="entry name" value="Terpene_cyclase_plant_C1"/>
</dbReference>
<dbReference type="InterPro" id="IPR001906">
    <property type="entry name" value="Terpene_synth_N"/>
</dbReference>
<dbReference type="InterPro" id="IPR036965">
    <property type="entry name" value="Terpene_synth_N_sf"/>
</dbReference>
<dbReference type="InterPro" id="IPR050148">
    <property type="entry name" value="Terpene_synthase-like"/>
</dbReference>
<dbReference type="InterPro" id="IPR005630">
    <property type="entry name" value="Terpene_synthase_metal-bd"/>
</dbReference>
<dbReference type="InterPro" id="IPR008930">
    <property type="entry name" value="Terpenoid_cyclase/PrenylTrfase"/>
</dbReference>
<dbReference type="PANTHER" id="PTHR31225">
    <property type="entry name" value="OS04G0344100 PROTEIN-RELATED"/>
    <property type="match status" value="1"/>
</dbReference>
<dbReference type="PANTHER" id="PTHR31225:SF9">
    <property type="entry name" value="TERPENE SYNTHASE 10"/>
    <property type="match status" value="1"/>
</dbReference>
<dbReference type="Pfam" id="PF01397">
    <property type="entry name" value="Terpene_synth"/>
    <property type="match status" value="1"/>
</dbReference>
<dbReference type="Pfam" id="PF03936">
    <property type="entry name" value="Terpene_synth_C"/>
    <property type="match status" value="1"/>
</dbReference>
<dbReference type="SFLD" id="SFLDG01019">
    <property type="entry name" value="Terpene_Cyclase_Like_1_C_Termi"/>
    <property type="match status" value="1"/>
</dbReference>
<dbReference type="SFLD" id="SFLDG01604">
    <property type="entry name" value="Terpene_Cyclase_Like_1_C_Termi"/>
    <property type="match status" value="1"/>
</dbReference>
<dbReference type="SUPFAM" id="SSF48239">
    <property type="entry name" value="Terpenoid cyclases/Protein prenyltransferases"/>
    <property type="match status" value="1"/>
</dbReference>
<dbReference type="SUPFAM" id="SSF48576">
    <property type="entry name" value="Terpenoid synthases"/>
    <property type="match status" value="1"/>
</dbReference>
<organism>
    <name type="scientific">Thymus caespititius</name>
    <name type="common">Cretan thyme</name>
    <name type="synonym">Origanum caespititium</name>
    <dbReference type="NCBI Taxonomy" id="751871"/>
    <lineage>
        <taxon>Eukaryota</taxon>
        <taxon>Viridiplantae</taxon>
        <taxon>Streptophyta</taxon>
        <taxon>Embryophyta</taxon>
        <taxon>Tracheophyta</taxon>
        <taxon>Spermatophyta</taxon>
        <taxon>Magnoliopsida</taxon>
        <taxon>eudicotyledons</taxon>
        <taxon>Gunneridae</taxon>
        <taxon>Pentapetalae</taxon>
        <taxon>asterids</taxon>
        <taxon>lamiids</taxon>
        <taxon>Lamiales</taxon>
        <taxon>Lamiaceae</taxon>
        <taxon>Nepetoideae</taxon>
        <taxon>Mentheae</taxon>
        <taxon>Thymus</taxon>
    </lineage>
</organism>
<name>GTPS3_THYCA</name>
<protein>
    <recommendedName>
        <fullName evidence="7">Gamma-terpinene synthase, chloroplastic</fullName>
        <ecNumber evidence="6">4.2.3.114</ecNumber>
    </recommendedName>
    <alternativeName>
        <fullName evidence="7">Terpene synthase 2</fullName>
        <shortName evidence="7">TcTPS2</shortName>
    </alternativeName>
</protein>